<gene>
    <name type="primary">torZ</name>
    <name type="synonym">bisC</name>
    <name type="ordered locus">HI_0643</name>
</gene>
<feature type="signal peptide" description="Tat-type signal" evidence="2">
    <location>
        <begin position="1"/>
        <end position="40"/>
    </location>
</feature>
<feature type="chain" id="PRO_0000019166" description="Trimethylamine-N-oxide reductase">
    <location>
        <begin position="41"/>
        <end position="825"/>
    </location>
</feature>
<feature type="binding site" evidence="1">
    <location>
        <position position="187"/>
    </location>
    <ligand>
        <name>Mo-bis(molybdopterin guanine dinucleotide)</name>
        <dbReference type="ChEBI" id="CHEBI:60539"/>
    </ligand>
    <ligandPart>
        <name>Mo</name>
        <dbReference type="ChEBI" id="CHEBI:28685"/>
    </ligandPart>
</feature>
<feature type="strand" evidence="5">
    <location>
        <begin position="47"/>
        <end position="52"/>
    </location>
</feature>
<feature type="strand" evidence="5">
    <location>
        <begin position="55"/>
        <end position="62"/>
    </location>
</feature>
<feature type="strand" evidence="5">
    <location>
        <begin position="65"/>
        <end position="73"/>
    </location>
</feature>
<feature type="helix" evidence="5">
    <location>
        <begin position="80"/>
        <end position="83"/>
    </location>
</feature>
<feature type="helix" evidence="5">
    <location>
        <begin position="85"/>
        <end position="90"/>
    </location>
</feature>
<feature type="strand" evidence="5">
    <location>
        <begin position="99"/>
        <end position="101"/>
    </location>
</feature>
<feature type="helix" evidence="5">
    <location>
        <begin position="102"/>
        <end position="106"/>
    </location>
</feature>
<feature type="helix" evidence="5">
    <location>
        <begin position="113"/>
        <end position="115"/>
    </location>
</feature>
<feature type="turn" evidence="6">
    <location>
        <begin position="116"/>
        <end position="118"/>
    </location>
</feature>
<feature type="strand" evidence="5">
    <location>
        <begin position="121"/>
        <end position="123"/>
    </location>
</feature>
<feature type="helix" evidence="5">
    <location>
        <begin position="126"/>
        <end position="143"/>
    </location>
</feature>
<feature type="helix" evidence="5">
    <location>
        <begin position="146"/>
        <end position="148"/>
    </location>
</feature>
<feature type="helix" evidence="5">
    <location>
        <begin position="165"/>
        <end position="175"/>
    </location>
</feature>
<feature type="strand" evidence="5">
    <location>
        <begin position="182"/>
        <end position="184"/>
    </location>
</feature>
<feature type="strand" evidence="5">
    <location>
        <begin position="186"/>
        <end position="188"/>
    </location>
</feature>
<feature type="helix" evidence="5">
    <location>
        <begin position="191"/>
        <end position="199"/>
    </location>
</feature>
<feature type="helix" evidence="5">
    <location>
        <begin position="211"/>
        <end position="217"/>
    </location>
</feature>
<feature type="strand" evidence="5">
    <location>
        <begin position="219"/>
        <end position="225"/>
    </location>
</feature>
<feature type="helix" evidence="5">
    <location>
        <begin position="228"/>
        <end position="231"/>
    </location>
</feature>
<feature type="strand" evidence="5">
    <location>
        <begin position="236"/>
        <end position="239"/>
    </location>
</feature>
<feature type="helix" evidence="5">
    <location>
        <begin position="242"/>
        <end position="252"/>
    </location>
</feature>
<feature type="strand" evidence="5">
    <location>
        <begin position="256"/>
        <end position="263"/>
    </location>
</feature>
<feature type="helix" evidence="5">
    <location>
        <begin position="266"/>
        <end position="270"/>
    </location>
</feature>
<feature type="strand" evidence="5">
    <location>
        <begin position="274"/>
        <end position="277"/>
    </location>
</feature>
<feature type="helix" evidence="5">
    <location>
        <begin position="283"/>
        <end position="296"/>
    </location>
</feature>
<feature type="helix" evidence="5">
    <location>
        <begin position="302"/>
        <end position="308"/>
    </location>
</feature>
<feature type="strand" evidence="5">
    <location>
        <begin position="309"/>
        <end position="311"/>
    </location>
</feature>
<feature type="helix" evidence="5">
    <location>
        <begin position="312"/>
        <end position="319"/>
    </location>
</feature>
<feature type="turn" evidence="5">
    <location>
        <begin position="320"/>
        <end position="324"/>
    </location>
</feature>
<feature type="helix" evidence="5">
    <location>
        <begin position="330"/>
        <end position="337"/>
    </location>
</feature>
<feature type="helix" evidence="5">
    <location>
        <begin position="341"/>
        <end position="353"/>
    </location>
</feature>
<feature type="strand" evidence="5">
    <location>
        <begin position="356"/>
        <end position="360"/>
    </location>
</feature>
<feature type="helix" evidence="5">
    <location>
        <begin position="363"/>
        <end position="365"/>
    </location>
</feature>
<feature type="turn" evidence="5">
    <location>
        <begin position="368"/>
        <end position="370"/>
    </location>
</feature>
<feature type="helix" evidence="5">
    <location>
        <begin position="371"/>
        <end position="384"/>
    </location>
</feature>
<feature type="strand" evidence="5">
    <location>
        <begin position="393"/>
        <end position="396"/>
    </location>
</feature>
<feature type="turn" evidence="5">
    <location>
        <begin position="401"/>
        <end position="404"/>
    </location>
</feature>
<feature type="helix" evidence="6">
    <location>
        <begin position="434"/>
        <end position="436"/>
    </location>
</feature>
<feature type="helix" evidence="5">
    <location>
        <begin position="440"/>
        <end position="442"/>
    </location>
</feature>
<feature type="helix" evidence="5">
    <location>
        <begin position="443"/>
        <end position="448"/>
    </location>
</feature>
<feature type="strand" evidence="5">
    <location>
        <begin position="453"/>
        <end position="456"/>
    </location>
</feature>
<feature type="strand" evidence="5">
    <location>
        <begin position="459"/>
        <end position="462"/>
    </location>
</feature>
<feature type="strand" evidence="5">
    <location>
        <begin position="468"/>
        <end position="473"/>
    </location>
</feature>
<feature type="helix" evidence="5">
    <location>
        <begin position="476"/>
        <end position="479"/>
    </location>
</feature>
<feature type="helix" evidence="5">
    <location>
        <begin position="483"/>
        <end position="489"/>
    </location>
</feature>
<feature type="strand" evidence="5">
    <location>
        <begin position="492"/>
        <end position="502"/>
    </location>
</feature>
<feature type="helix" evidence="5">
    <location>
        <begin position="507"/>
        <end position="509"/>
    </location>
</feature>
<feature type="strand" evidence="5">
    <location>
        <begin position="511"/>
        <end position="516"/>
    </location>
</feature>
<feature type="helix" evidence="5">
    <location>
        <begin position="519"/>
        <end position="521"/>
    </location>
</feature>
<feature type="strand" evidence="5">
    <location>
        <begin position="524"/>
        <end position="529"/>
    </location>
</feature>
<feature type="turn" evidence="5">
    <location>
        <begin position="530"/>
        <end position="532"/>
    </location>
</feature>
<feature type="strand" evidence="5">
    <location>
        <begin position="535"/>
        <end position="539"/>
    </location>
</feature>
<feature type="helix" evidence="5">
    <location>
        <begin position="552"/>
        <end position="562"/>
    </location>
</feature>
<feature type="helix" evidence="5">
    <location>
        <begin position="566"/>
        <end position="570"/>
    </location>
</feature>
<feature type="helix" evidence="5">
    <location>
        <begin position="575"/>
        <end position="592"/>
    </location>
</feature>
<feature type="helix" evidence="5">
    <location>
        <begin position="600"/>
        <end position="606"/>
    </location>
</feature>
<feature type="helix" evidence="5">
    <location>
        <begin position="616"/>
        <end position="620"/>
    </location>
</feature>
<feature type="helix" evidence="5">
    <location>
        <begin position="625"/>
        <end position="629"/>
    </location>
</feature>
<feature type="turn" evidence="5">
    <location>
        <begin position="631"/>
        <end position="633"/>
    </location>
</feature>
<feature type="strand" evidence="5">
    <location>
        <begin position="641"/>
        <end position="646"/>
    </location>
</feature>
<feature type="helix" evidence="5">
    <location>
        <begin position="648"/>
        <end position="653"/>
    </location>
</feature>
<feature type="strand" evidence="5">
    <location>
        <begin position="668"/>
        <end position="670"/>
    </location>
</feature>
<feature type="helix" evidence="5">
    <location>
        <begin position="671"/>
        <end position="673"/>
    </location>
</feature>
<feature type="strand" evidence="5">
    <location>
        <begin position="676"/>
        <end position="678"/>
    </location>
</feature>
<feature type="strand" evidence="5">
    <location>
        <begin position="680"/>
        <end position="683"/>
    </location>
</feature>
<feature type="strand" evidence="5">
    <location>
        <begin position="688"/>
        <end position="691"/>
    </location>
</feature>
<feature type="turn" evidence="5">
    <location>
        <begin position="695"/>
        <end position="697"/>
    </location>
</feature>
<feature type="helix" evidence="5">
    <location>
        <begin position="699"/>
        <end position="703"/>
    </location>
</feature>
<feature type="strand" evidence="5">
    <location>
        <begin position="711"/>
        <end position="714"/>
    </location>
</feature>
<feature type="helix" evidence="5">
    <location>
        <begin position="716"/>
        <end position="720"/>
    </location>
</feature>
<feature type="turn" evidence="5">
    <location>
        <begin position="721"/>
        <end position="723"/>
    </location>
</feature>
<feature type="strand" evidence="5">
    <location>
        <begin position="729"/>
        <end position="733"/>
    </location>
</feature>
<feature type="strand" evidence="5">
    <location>
        <begin position="738"/>
        <end position="745"/>
    </location>
</feature>
<feature type="strand" evidence="6">
    <location>
        <begin position="747"/>
        <end position="749"/>
    </location>
</feature>
<feature type="strand" evidence="5">
    <location>
        <begin position="753"/>
        <end position="756"/>
    </location>
</feature>
<feature type="strand" evidence="5">
    <location>
        <begin position="774"/>
        <end position="777"/>
    </location>
</feature>
<feature type="helix" evidence="5">
    <location>
        <begin position="780"/>
        <end position="782"/>
    </location>
</feature>
<feature type="turn" evidence="5">
    <location>
        <begin position="791"/>
        <end position="793"/>
    </location>
</feature>
<feature type="strand" evidence="5">
    <location>
        <begin position="802"/>
        <end position="807"/>
    </location>
</feature>
<sequence length="825" mass="91053">MKKNNVNEQRRDFLKKTSLGVAGSALSGGMVGVVSKSAVAKEAEMKTVVTAAHWGSIGVVVQDGKVVKSGPAIEPAVPNELQTVVADQLYSERRVKCPMVRKGFLANPGKSDTTMRGRDEWVRVSWDEALDLVHNQLKRVRDEHGSTGIFAGSYGWFSCGSLHASRTLLQRYMNATGGFVGHKGDYSTGAAQVIMPHVLGTIEVYEQQTSWESILESSDIIVLWSANPLTTMRIAWMSTDQKGIEYFKKFQASGKRIICIDPQKSETCQMLNAEWIPVNTATDVPLMLGIAHTLVEQGKHDKDFLKKYTSGYAKFEEYLLGKTDGQPKTAEWAAKICGVPAETIKQLAADFASKRTMLMGGWGMQRQRHGEQTHWMLVTLASMLGQIGLPGGGFGLSYHYSNGGVPTATGGIIGSITASPSGKAGAKTWLDDTSKSAFPLARIADVLLHPGKKIQYNGTEITYPDIKAVYWAGGNPFVHHQDTNTLVKAFQKPDVVIVNEVNWTPTARMADIVLPATTSYERNDLTMAGDYSMMSVYPMKQVVPPQFEAKNDYDIFVELAKRAGVEEQYTEGKTEMEWLEEFYNAAFSAARANRVAMPRFDKFWAENKPLSFEAGEAAKKWVRYGEFREDPLLNPLGTPSGKIEIFSDVVEKMNYNDCKGHPSWMEPEEFAGNVTEEYPLALVTPHPYYRLHSQLAHTSLRQKYAVNDREPVMIHPEDAAARGIKDGDIVRIHSKRGQVLAGAAVTENIIKGTVALHEGAWYDPMYLGESEKPLCKNGCANVLTRDEGTSKLAQGNSPNTCIVQIEKFIGVAPEVTVFKQPKQVA</sequence>
<organism>
    <name type="scientific">Haemophilus influenzae (strain ATCC 51907 / DSM 11121 / KW20 / Rd)</name>
    <dbReference type="NCBI Taxonomy" id="71421"/>
    <lineage>
        <taxon>Bacteria</taxon>
        <taxon>Pseudomonadati</taxon>
        <taxon>Pseudomonadota</taxon>
        <taxon>Gammaproteobacteria</taxon>
        <taxon>Pasteurellales</taxon>
        <taxon>Pasteurellaceae</taxon>
        <taxon>Haemophilus</taxon>
    </lineage>
</organism>
<proteinExistence type="evidence at protein level"/>
<name>TORZ_HAEIN</name>
<comment type="function">
    <text evidence="1">Reduces trimethylamine-N-oxide (TMAO) into trimethylamine; an anaerobic reaction coupled to energy-yielding reactions.</text>
</comment>
<comment type="catalytic activity">
    <reaction>
        <text>trimethylamine + 2 Fe(III)-[cytochrome c] + H2O = trimethylamine N-oxide + 2 Fe(II)-[cytochrome c] + 3 H(+)</text>
        <dbReference type="Rhea" id="RHEA:24236"/>
        <dbReference type="Rhea" id="RHEA-COMP:10350"/>
        <dbReference type="Rhea" id="RHEA-COMP:14399"/>
        <dbReference type="ChEBI" id="CHEBI:15377"/>
        <dbReference type="ChEBI" id="CHEBI:15378"/>
        <dbReference type="ChEBI" id="CHEBI:15724"/>
        <dbReference type="ChEBI" id="CHEBI:29033"/>
        <dbReference type="ChEBI" id="CHEBI:29034"/>
        <dbReference type="ChEBI" id="CHEBI:58389"/>
        <dbReference type="EC" id="1.7.2.3"/>
    </reaction>
</comment>
<comment type="cofactor">
    <cofactor evidence="1">
        <name>Mo-bis(molybdopterin guanine dinucleotide)</name>
        <dbReference type="ChEBI" id="CHEBI:60539"/>
    </cofactor>
    <text evidence="1">Binds 1 molybdenum-bis(molybdopterin guanine dinucleotide) (Mo-bis-MGD) cofactor per subunit.</text>
</comment>
<comment type="subcellular location">
    <subcellularLocation>
        <location evidence="1">Periplasm</location>
    </subcellularLocation>
</comment>
<comment type="PTM">
    <text>Predicted to be exported by the Tat system. The position of the signal peptide cleavage has not been experimentally proven.</text>
</comment>
<comment type="similarity">
    <text evidence="3">Belongs to the prokaryotic molybdopterin-containing oxidoreductase family.</text>
</comment>
<comment type="caution">
    <text evidence="4">Was originally assigned to be a biotin sulfoxide reductase hence the original gene designation of bisC.</text>
</comment>
<dbReference type="EC" id="1.7.2.3"/>
<dbReference type="EMBL" id="L42023">
    <property type="protein sequence ID" value="AAC22303.1"/>
    <property type="molecule type" value="Genomic_DNA"/>
</dbReference>
<dbReference type="PIR" id="H64083">
    <property type="entry name" value="H64083"/>
</dbReference>
<dbReference type="RefSeq" id="NP_438803.1">
    <property type="nucleotide sequence ID" value="NC_000907.1"/>
</dbReference>
<dbReference type="PDB" id="7L5I">
    <property type="method" value="X-ray"/>
    <property type="resolution" value="1.73 A"/>
    <property type="chains" value="A=41-825"/>
</dbReference>
<dbReference type="PDB" id="7L5S">
    <property type="method" value="X-ray"/>
    <property type="resolution" value="2.09 A"/>
    <property type="chains" value="A=41-825"/>
</dbReference>
<dbReference type="PDBsum" id="7L5I"/>
<dbReference type="PDBsum" id="7L5S"/>
<dbReference type="SMR" id="P44798"/>
<dbReference type="STRING" id="71421.HI_0643"/>
<dbReference type="TCDB" id="5.A.3.4.4">
    <property type="family name" value="the prokaryotic molybdopterin-containing oxidoreductase (pmo) family"/>
</dbReference>
<dbReference type="EnsemblBacteria" id="AAC22303">
    <property type="protein sequence ID" value="AAC22303"/>
    <property type="gene ID" value="HI_0643"/>
</dbReference>
<dbReference type="KEGG" id="hin:HI_0643"/>
<dbReference type="PATRIC" id="fig|71421.8.peg.672"/>
<dbReference type="eggNOG" id="COG0243">
    <property type="taxonomic scope" value="Bacteria"/>
</dbReference>
<dbReference type="HOGENOM" id="CLU_000422_13_3_6"/>
<dbReference type="OrthoDB" id="9815647at2"/>
<dbReference type="PhylomeDB" id="P44798"/>
<dbReference type="BioCyc" id="HINF71421:G1GJ1-678-MONOMER"/>
<dbReference type="Proteomes" id="UP000000579">
    <property type="component" value="Chromosome"/>
</dbReference>
<dbReference type="GO" id="GO:0030288">
    <property type="term" value="C:outer membrane-bounded periplasmic space"/>
    <property type="evidence" value="ECO:0000318"/>
    <property type="project" value="GO_Central"/>
</dbReference>
<dbReference type="GO" id="GO:0009055">
    <property type="term" value="F:electron transfer activity"/>
    <property type="evidence" value="ECO:0000318"/>
    <property type="project" value="GO_Central"/>
</dbReference>
<dbReference type="GO" id="GO:0030151">
    <property type="term" value="F:molybdenum ion binding"/>
    <property type="evidence" value="ECO:0000318"/>
    <property type="project" value="GO_Central"/>
</dbReference>
<dbReference type="GO" id="GO:0043546">
    <property type="term" value="F:molybdopterin cofactor binding"/>
    <property type="evidence" value="ECO:0007669"/>
    <property type="project" value="InterPro"/>
</dbReference>
<dbReference type="GO" id="GO:0050626">
    <property type="term" value="F:trimethylamine-N-oxide reductase (cytochrome c) activity"/>
    <property type="evidence" value="ECO:0007669"/>
    <property type="project" value="UniProtKB-EC"/>
</dbReference>
<dbReference type="GO" id="GO:0009061">
    <property type="term" value="P:anaerobic respiration"/>
    <property type="evidence" value="ECO:0000318"/>
    <property type="project" value="GO_Central"/>
</dbReference>
<dbReference type="CDD" id="cd02793">
    <property type="entry name" value="MopB_CT_DMSOR-BSOR-TMAOR"/>
    <property type="match status" value="1"/>
</dbReference>
<dbReference type="CDD" id="cd02769">
    <property type="entry name" value="MopB_DMSOR-BSOR-TMAOR"/>
    <property type="match status" value="1"/>
</dbReference>
<dbReference type="FunFam" id="2.40.40.20:FF:000009">
    <property type="entry name" value="Biotin sulfoxide reductase 2"/>
    <property type="match status" value="1"/>
</dbReference>
<dbReference type="FunFam" id="3.40.228.10:FF:000003">
    <property type="entry name" value="Biotin sulfoxide reductase 2"/>
    <property type="match status" value="1"/>
</dbReference>
<dbReference type="Gene3D" id="2.40.40.20">
    <property type="match status" value="1"/>
</dbReference>
<dbReference type="Gene3D" id="3.40.50.740">
    <property type="match status" value="1"/>
</dbReference>
<dbReference type="Gene3D" id="3.40.228.10">
    <property type="entry name" value="Dimethylsulfoxide Reductase, domain 2"/>
    <property type="match status" value="1"/>
</dbReference>
<dbReference type="Gene3D" id="3.90.55.10">
    <property type="entry name" value="Dimethylsulfoxide Reductase, domain 3"/>
    <property type="match status" value="1"/>
</dbReference>
<dbReference type="InterPro" id="IPR009010">
    <property type="entry name" value="Asp_de-COase-like_dom_sf"/>
</dbReference>
<dbReference type="InterPro" id="IPR006658">
    <property type="entry name" value="BisC"/>
</dbReference>
<dbReference type="InterPro" id="IPR041954">
    <property type="entry name" value="CT_DMSOR/BSOR/TMAOR"/>
</dbReference>
<dbReference type="InterPro" id="IPR041460">
    <property type="entry name" value="Molybdopterin_N"/>
</dbReference>
<dbReference type="InterPro" id="IPR006657">
    <property type="entry name" value="MoPterin_dinucl-bd_dom"/>
</dbReference>
<dbReference type="InterPro" id="IPR006656">
    <property type="entry name" value="Mopterin_OxRdtase"/>
</dbReference>
<dbReference type="InterPro" id="IPR006655">
    <property type="entry name" value="Mopterin_OxRdtase_prok_CS"/>
</dbReference>
<dbReference type="InterPro" id="IPR050612">
    <property type="entry name" value="Prok_Mopterin_Oxidored"/>
</dbReference>
<dbReference type="InterPro" id="IPR006311">
    <property type="entry name" value="TAT_signal"/>
</dbReference>
<dbReference type="NCBIfam" id="TIGR00509">
    <property type="entry name" value="bisC_fam"/>
    <property type="match status" value="1"/>
</dbReference>
<dbReference type="NCBIfam" id="NF011682">
    <property type="entry name" value="PRK15102.1"/>
    <property type="match status" value="1"/>
</dbReference>
<dbReference type="PANTHER" id="PTHR43742">
    <property type="entry name" value="TRIMETHYLAMINE-N-OXIDE REDUCTASE"/>
    <property type="match status" value="1"/>
</dbReference>
<dbReference type="PANTHER" id="PTHR43742:SF10">
    <property type="entry name" value="TRIMETHYLAMINE-N-OXIDE REDUCTASE 2"/>
    <property type="match status" value="1"/>
</dbReference>
<dbReference type="Pfam" id="PF00384">
    <property type="entry name" value="Molybdopterin"/>
    <property type="match status" value="1"/>
</dbReference>
<dbReference type="Pfam" id="PF18364">
    <property type="entry name" value="Molybdopterin_N"/>
    <property type="match status" value="1"/>
</dbReference>
<dbReference type="Pfam" id="PF01568">
    <property type="entry name" value="Molydop_binding"/>
    <property type="match status" value="1"/>
</dbReference>
<dbReference type="SUPFAM" id="SSF50692">
    <property type="entry name" value="ADC-like"/>
    <property type="match status" value="1"/>
</dbReference>
<dbReference type="SUPFAM" id="SSF53706">
    <property type="entry name" value="Formate dehydrogenase/DMSO reductase, domains 1-3"/>
    <property type="match status" value="1"/>
</dbReference>
<dbReference type="PROSITE" id="PS00490">
    <property type="entry name" value="MOLYBDOPTERIN_PROK_2"/>
    <property type="match status" value="1"/>
</dbReference>
<dbReference type="PROSITE" id="PS00932">
    <property type="entry name" value="MOLYBDOPTERIN_PROK_3"/>
    <property type="match status" value="1"/>
</dbReference>
<dbReference type="PROSITE" id="PS51318">
    <property type="entry name" value="TAT"/>
    <property type="match status" value="1"/>
</dbReference>
<reference key="1">
    <citation type="journal article" date="1995" name="Science">
        <title>Whole-genome random sequencing and assembly of Haemophilus influenzae Rd.</title>
        <authorList>
            <person name="Fleischmann R.D."/>
            <person name="Adams M.D."/>
            <person name="White O."/>
            <person name="Clayton R.A."/>
            <person name="Kirkness E.F."/>
            <person name="Kerlavage A.R."/>
            <person name="Bult C.J."/>
            <person name="Tomb J.-F."/>
            <person name="Dougherty B.A."/>
            <person name="Merrick J.M."/>
            <person name="McKenney K."/>
            <person name="Sutton G.G."/>
            <person name="FitzHugh W."/>
            <person name="Fields C.A."/>
            <person name="Gocayne J.D."/>
            <person name="Scott J.D."/>
            <person name="Shirley R."/>
            <person name="Liu L.-I."/>
            <person name="Glodek A."/>
            <person name="Kelley J.M."/>
            <person name="Weidman J.F."/>
            <person name="Phillips C.A."/>
            <person name="Spriggs T."/>
            <person name="Hedblom E."/>
            <person name="Cotton M.D."/>
            <person name="Utterback T.R."/>
            <person name="Hanna M.C."/>
            <person name="Nguyen D.T."/>
            <person name="Saudek D.M."/>
            <person name="Brandon R.C."/>
            <person name="Fine L.D."/>
            <person name="Fritchman J.L."/>
            <person name="Fuhrmann J.L."/>
            <person name="Geoghagen N.S.M."/>
            <person name="Gnehm C.L."/>
            <person name="McDonald L.A."/>
            <person name="Small K.V."/>
            <person name="Fraser C.M."/>
            <person name="Smith H.O."/>
            <person name="Venter J.C."/>
        </authorList>
    </citation>
    <scope>NUCLEOTIDE SEQUENCE [LARGE SCALE GENOMIC DNA]</scope>
    <source>
        <strain>ATCC 51907 / DSM 11121 / KW20 / Rd</strain>
    </source>
</reference>
<keyword id="KW-0002">3D-structure</keyword>
<keyword id="KW-0479">Metal-binding</keyword>
<keyword id="KW-0500">Molybdenum</keyword>
<keyword id="KW-0560">Oxidoreductase</keyword>
<keyword id="KW-0574">Periplasm</keyword>
<keyword id="KW-1185">Reference proteome</keyword>
<keyword id="KW-0732">Signal</keyword>
<accession>P44798</accession>
<protein>
    <recommendedName>
        <fullName>Trimethylamine-N-oxide reductase</fullName>
        <shortName>TMAO reductase</shortName>
        <shortName>Trimethylamine oxidase</shortName>
        <ecNumber>1.7.2.3</ecNumber>
    </recommendedName>
</protein>
<evidence type="ECO:0000250" key="1"/>
<evidence type="ECO:0000255" key="2">
    <source>
        <dbReference type="PROSITE-ProRule" id="PRU00648"/>
    </source>
</evidence>
<evidence type="ECO:0000305" key="3"/>
<evidence type="ECO:0000305" key="4">
    <source>
    </source>
</evidence>
<evidence type="ECO:0007829" key="5">
    <source>
        <dbReference type="PDB" id="7L5I"/>
    </source>
</evidence>
<evidence type="ECO:0007829" key="6">
    <source>
        <dbReference type="PDB" id="7L5S"/>
    </source>
</evidence>